<dbReference type="EC" id="2.7.1.92" evidence="1"/>
<dbReference type="EMBL" id="CP000040">
    <property type="protein sequence ID" value="AAY60450.1"/>
    <property type="molecule type" value="Genomic_DNA"/>
</dbReference>
<dbReference type="RefSeq" id="WP_001068599.1">
    <property type="nucleotide sequence ID" value="NC_007103.1"/>
</dbReference>
<dbReference type="SMR" id="Q4V1F7"/>
<dbReference type="KEGG" id="bcz:pE33L466_0300"/>
<dbReference type="PATRIC" id="fig|288681.22.peg.5506"/>
<dbReference type="UniPathway" id="UPA00076">
    <property type="reaction ID" value="UER00146"/>
</dbReference>
<dbReference type="Proteomes" id="UP000002612">
    <property type="component" value="Plasmid pE33L466"/>
</dbReference>
<dbReference type="GO" id="GO:0047590">
    <property type="term" value="F:5-dehydro-2-deoxygluconokinase activity"/>
    <property type="evidence" value="ECO:0007669"/>
    <property type="project" value="UniProtKB-UniRule"/>
</dbReference>
<dbReference type="GO" id="GO:0005524">
    <property type="term" value="F:ATP binding"/>
    <property type="evidence" value="ECO:0007669"/>
    <property type="project" value="UniProtKB-UniRule"/>
</dbReference>
<dbReference type="GO" id="GO:0019310">
    <property type="term" value="P:inositol catabolic process"/>
    <property type="evidence" value="ECO:0007669"/>
    <property type="project" value="UniProtKB-UniRule"/>
</dbReference>
<dbReference type="CDD" id="cd01166">
    <property type="entry name" value="KdgK"/>
    <property type="match status" value="1"/>
</dbReference>
<dbReference type="Gene3D" id="3.40.1190.20">
    <property type="match status" value="1"/>
</dbReference>
<dbReference type="Gene3D" id="2.20.150.10">
    <property type="entry name" value="putative 5-dehydro-2- deoxygluconokinase"/>
    <property type="match status" value="1"/>
</dbReference>
<dbReference type="HAMAP" id="MF_01668">
    <property type="entry name" value="IolC"/>
    <property type="match status" value="1"/>
</dbReference>
<dbReference type="InterPro" id="IPR002173">
    <property type="entry name" value="Carboh/pur_kinase_PfkB_CS"/>
</dbReference>
<dbReference type="InterPro" id="IPR022841">
    <property type="entry name" value="DKG_kinase_firmi"/>
</dbReference>
<dbReference type="InterPro" id="IPR030830">
    <property type="entry name" value="Myo_inos_IolC"/>
</dbReference>
<dbReference type="InterPro" id="IPR023314">
    <property type="entry name" value="Myo_inos_IolC-like_sf"/>
</dbReference>
<dbReference type="InterPro" id="IPR050306">
    <property type="entry name" value="PfkB_Carbo_kinase"/>
</dbReference>
<dbReference type="InterPro" id="IPR011611">
    <property type="entry name" value="PfkB_dom"/>
</dbReference>
<dbReference type="InterPro" id="IPR029056">
    <property type="entry name" value="Ribokinase-like"/>
</dbReference>
<dbReference type="NCBIfam" id="TIGR04382">
    <property type="entry name" value="myo_inos_iolC_N"/>
    <property type="match status" value="1"/>
</dbReference>
<dbReference type="PANTHER" id="PTHR43085:SF49">
    <property type="entry name" value="5-DEHYDRO-2-DEOXYGLUCONOKINASE"/>
    <property type="match status" value="1"/>
</dbReference>
<dbReference type="PANTHER" id="PTHR43085">
    <property type="entry name" value="HEXOKINASE FAMILY MEMBER"/>
    <property type="match status" value="1"/>
</dbReference>
<dbReference type="Pfam" id="PF00294">
    <property type="entry name" value="PfkB"/>
    <property type="match status" value="1"/>
</dbReference>
<dbReference type="SUPFAM" id="SSF53613">
    <property type="entry name" value="Ribokinase-like"/>
    <property type="match status" value="1"/>
</dbReference>
<dbReference type="PROSITE" id="PS00584">
    <property type="entry name" value="PFKB_KINASES_2"/>
    <property type="match status" value="1"/>
</dbReference>
<accession>Q4V1F7</accession>
<reference key="1">
    <citation type="journal article" date="2006" name="J. Bacteriol.">
        <title>Pathogenomic sequence analysis of Bacillus cereus and Bacillus thuringiensis isolates closely related to Bacillus anthracis.</title>
        <authorList>
            <person name="Han C.S."/>
            <person name="Xie G."/>
            <person name="Challacombe J.F."/>
            <person name="Altherr M.R."/>
            <person name="Bhotika S.S."/>
            <person name="Bruce D."/>
            <person name="Campbell C.S."/>
            <person name="Campbell M.L."/>
            <person name="Chen J."/>
            <person name="Chertkov O."/>
            <person name="Cleland C."/>
            <person name="Dimitrijevic M."/>
            <person name="Doggett N.A."/>
            <person name="Fawcett J.J."/>
            <person name="Glavina T."/>
            <person name="Goodwin L.A."/>
            <person name="Hill K.K."/>
            <person name="Hitchcock P."/>
            <person name="Jackson P.J."/>
            <person name="Keim P."/>
            <person name="Kewalramani A.R."/>
            <person name="Longmire J."/>
            <person name="Lucas S."/>
            <person name="Malfatti S."/>
            <person name="McMurry K."/>
            <person name="Meincke L.J."/>
            <person name="Misra M."/>
            <person name="Moseman B.L."/>
            <person name="Mundt M."/>
            <person name="Munk A.C."/>
            <person name="Okinaka R.T."/>
            <person name="Parson-Quintana B."/>
            <person name="Reilly L.P."/>
            <person name="Richardson P."/>
            <person name="Robinson D.L."/>
            <person name="Rubin E."/>
            <person name="Saunders E."/>
            <person name="Tapia R."/>
            <person name="Tesmer J.G."/>
            <person name="Thayer N."/>
            <person name="Thompson L.S."/>
            <person name="Tice H."/>
            <person name="Ticknor L.O."/>
            <person name="Wills P.L."/>
            <person name="Brettin T.S."/>
            <person name="Gilna P."/>
        </authorList>
    </citation>
    <scope>NUCLEOTIDE SEQUENCE [LARGE SCALE GENOMIC DNA]</scope>
    <source>
        <strain>ZK / E33L</strain>
    </source>
</reference>
<geneLocation type="plasmid">
    <name>pE33L466</name>
</geneLocation>
<name>IOLC2_BACCZ</name>
<gene>
    <name evidence="1" type="primary">iolC2</name>
    <name type="ordered locus">pE33L466_0300</name>
</gene>
<comment type="function">
    <text evidence="1">Catalyzes the phosphorylation of 5-dehydro-2-deoxy-D-gluconate (2-deoxy-5-keto-D-gluconate or DKG) to 6-phospho-5-dehydro-2-deoxy-D-gluconate (DKGP).</text>
</comment>
<comment type="catalytic activity">
    <reaction evidence="1">
        <text>5-dehydro-2-deoxy-D-gluconate + ATP = 6-phospho-5-dehydro-2-deoxy-D-gluconate + ADP + H(+)</text>
        <dbReference type="Rhea" id="RHEA:13497"/>
        <dbReference type="ChEBI" id="CHEBI:15378"/>
        <dbReference type="ChEBI" id="CHEBI:16669"/>
        <dbReference type="ChEBI" id="CHEBI:30616"/>
        <dbReference type="ChEBI" id="CHEBI:57949"/>
        <dbReference type="ChEBI" id="CHEBI:456216"/>
        <dbReference type="EC" id="2.7.1.92"/>
    </reaction>
</comment>
<comment type="pathway">
    <text evidence="1">Polyol metabolism; myo-inositol degradation into acetyl-CoA; acetyl-CoA from myo-inositol: step 5/7.</text>
</comment>
<comment type="similarity">
    <text evidence="1">Belongs to the carbohydrate kinase PfkB family.</text>
</comment>
<evidence type="ECO:0000255" key="1">
    <source>
        <dbReference type="HAMAP-Rule" id="MF_01668"/>
    </source>
</evidence>
<organism>
    <name type="scientific">Bacillus cereus (strain ZK / E33L)</name>
    <dbReference type="NCBI Taxonomy" id="288681"/>
    <lineage>
        <taxon>Bacteria</taxon>
        <taxon>Bacillati</taxon>
        <taxon>Bacillota</taxon>
        <taxon>Bacilli</taxon>
        <taxon>Bacillales</taxon>
        <taxon>Bacillaceae</taxon>
        <taxon>Bacillus</taxon>
        <taxon>Bacillus cereus group</taxon>
    </lineage>
</organism>
<protein>
    <recommendedName>
        <fullName evidence="1">5-dehydro-2-deoxygluconokinase 2</fullName>
        <ecNumber evidence="1">2.7.1.92</ecNumber>
    </recommendedName>
    <alternativeName>
        <fullName evidence="1">2-deoxy-5-keto-D-gluconate kinase 2</fullName>
        <shortName evidence="1">DKG kinase 2</shortName>
    </alternativeName>
</protein>
<sequence>MNPLIFKEDCPLDLIAVGRLCVDLNANETQRPMEATRTFTKYVGGSPANIAIGATRLGLQTGFIGKVSDDQMGRFITRYLQDNNINTDQICIDRTGAVTGLAFTEIKSPEDCSILMYRDNVADLNLDPTEVSEDYIKQSKALLISGTALAKSPSREAVFLALEYARKHDVVVFFDVDYRPYTWQSEAETAVYYNLAAEKSDVIIGTREEFDMMEKLLNYEESNDQVTAERWFSHHAKIVVIKHGGDGSIAYTRDGQSHRGGIFKTKVLKTFGAGDSYASAFIYGLMQGLEIPQAMRLGGASASIVISKHSCSDAMPTRAEISAFMEIAEEIV</sequence>
<proteinExistence type="inferred from homology"/>
<feature type="chain" id="PRO_0000352287" description="5-dehydro-2-deoxygluconokinase 2">
    <location>
        <begin position="1"/>
        <end position="332"/>
    </location>
</feature>
<keyword id="KW-0067">ATP-binding</keyword>
<keyword id="KW-0418">Kinase</keyword>
<keyword id="KW-0547">Nucleotide-binding</keyword>
<keyword id="KW-0614">Plasmid</keyword>
<keyword id="KW-0808">Transferase</keyword>